<organism>
    <name type="scientific">Salmonella agona (strain SL483)</name>
    <dbReference type="NCBI Taxonomy" id="454166"/>
    <lineage>
        <taxon>Bacteria</taxon>
        <taxon>Pseudomonadati</taxon>
        <taxon>Pseudomonadota</taxon>
        <taxon>Gammaproteobacteria</taxon>
        <taxon>Enterobacterales</taxon>
        <taxon>Enterobacteriaceae</taxon>
        <taxon>Salmonella</taxon>
    </lineage>
</organism>
<protein>
    <recommendedName>
        <fullName evidence="1">Chaperone protein TorD</fullName>
    </recommendedName>
</protein>
<name>TORD_SALA4</name>
<accession>B5EY97</accession>
<comment type="function">
    <text evidence="1">Involved in the biogenesis of TorA. Acts on TorA before the insertion of the molybdenum cofactor and, as a result, probably favors a conformation of the apoenzyme that is competent for acquiring the cofactor.</text>
</comment>
<comment type="subcellular location">
    <subcellularLocation>
        <location evidence="1">Cytoplasm</location>
    </subcellularLocation>
</comment>
<comment type="similarity">
    <text evidence="1">Belongs to the TorD/DmsD family. TorD subfamily.</text>
</comment>
<reference key="1">
    <citation type="journal article" date="2011" name="J. Bacteriol.">
        <title>Comparative genomics of 28 Salmonella enterica isolates: evidence for CRISPR-mediated adaptive sublineage evolution.</title>
        <authorList>
            <person name="Fricke W.F."/>
            <person name="Mammel M.K."/>
            <person name="McDermott P.F."/>
            <person name="Tartera C."/>
            <person name="White D.G."/>
            <person name="Leclerc J.E."/>
            <person name="Ravel J."/>
            <person name="Cebula T.A."/>
        </authorList>
    </citation>
    <scope>NUCLEOTIDE SEQUENCE [LARGE SCALE GENOMIC DNA]</scope>
    <source>
        <strain>SL483</strain>
    </source>
</reference>
<feature type="chain" id="PRO_1000137511" description="Chaperone protein TorD">
    <location>
        <begin position="1"/>
        <end position="210"/>
    </location>
</feature>
<dbReference type="EMBL" id="CP001138">
    <property type="protein sequence ID" value="ACH52837.1"/>
    <property type="molecule type" value="Genomic_DNA"/>
</dbReference>
<dbReference type="RefSeq" id="WP_000595417.1">
    <property type="nucleotide sequence ID" value="NC_011149.1"/>
</dbReference>
<dbReference type="SMR" id="B5EY97"/>
<dbReference type="KEGG" id="sea:SeAg_B4049"/>
<dbReference type="HOGENOM" id="CLU_077650_4_0_6"/>
<dbReference type="Proteomes" id="UP000008819">
    <property type="component" value="Chromosome"/>
</dbReference>
<dbReference type="GO" id="GO:0005737">
    <property type="term" value="C:cytoplasm"/>
    <property type="evidence" value="ECO:0007669"/>
    <property type="project" value="UniProtKB-SubCell"/>
</dbReference>
<dbReference type="GO" id="GO:0051259">
    <property type="term" value="P:protein complex oligomerization"/>
    <property type="evidence" value="ECO:0007669"/>
    <property type="project" value="InterPro"/>
</dbReference>
<dbReference type="GO" id="GO:0006457">
    <property type="term" value="P:protein folding"/>
    <property type="evidence" value="ECO:0007669"/>
    <property type="project" value="UniProtKB-UniRule"/>
</dbReference>
<dbReference type="Gene3D" id="1.20.120.1820">
    <property type="match status" value="1"/>
</dbReference>
<dbReference type="Gene3D" id="1.20.1280.20">
    <property type="entry name" value="HscB, C-terminal domain"/>
    <property type="match status" value="1"/>
</dbReference>
<dbReference type="HAMAP" id="MF_01150">
    <property type="entry name" value="TorD"/>
    <property type="match status" value="1"/>
</dbReference>
<dbReference type="InterPro" id="IPR023069">
    <property type="entry name" value="Chaperone_TorD"/>
</dbReference>
<dbReference type="InterPro" id="IPR020945">
    <property type="entry name" value="DMSO/NO3_reduct_chaperone"/>
</dbReference>
<dbReference type="InterPro" id="IPR036386">
    <property type="entry name" value="HscB_C_sf"/>
</dbReference>
<dbReference type="InterPro" id="IPR036411">
    <property type="entry name" value="TorD-like_sf"/>
</dbReference>
<dbReference type="InterPro" id="IPR050289">
    <property type="entry name" value="TorD/DmsD_chaperones"/>
</dbReference>
<dbReference type="NCBIfam" id="NF003442">
    <property type="entry name" value="PRK04976.1"/>
    <property type="match status" value="1"/>
</dbReference>
<dbReference type="PANTHER" id="PTHR34227:SF11">
    <property type="entry name" value="CHAPERONE PROTEIN TORD"/>
    <property type="match status" value="1"/>
</dbReference>
<dbReference type="PANTHER" id="PTHR34227">
    <property type="entry name" value="CHAPERONE PROTEIN YCDY"/>
    <property type="match status" value="1"/>
</dbReference>
<dbReference type="Pfam" id="PF02613">
    <property type="entry name" value="Nitrate_red_del"/>
    <property type="match status" value="1"/>
</dbReference>
<dbReference type="SUPFAM" id="SSF89155">
    <property type="entry name" value="TorD-like"/>
    <property type="match status" value="1"/>
</dbReference>
<sequence>MIKQPALAQEQYACVYAWLALLFFREVDDEGLIQLQSAEIADWLALLKRQPALAASVALLEQKIAALSLRQDAQLELAADFCGLFLMTDKKSALPYASQYPQQEPGMIKHLLLEAGMEVNDDFKEPADHLAIYLELLSHLHFSLGESFQQRRMNKLRQKTLSSLLEWLPEFTNNCLKHDSYGFYAALSQLLLAIVLFDDGKEDLSIVAAE</sequence>
<keyword id="KW-0143">Chaperone</keyword>
<keyword id="KW-0963">Cytoplasm</keyword>
<gene>
    <name evidence="1" type="primary">torD</name>
    <name type="ordered locus">SeAg_B4049</name>
</gene>
<proteinExistence type="inferred from homology"/>
<evidence type="ECO:0000255" key="1">
    <source>
        <dbReference type="HAMAP-Rule" id="MF_01150"/>
    </source>
</evidence>